<accession>Q3HXY6</accession>
<reference key="1">
    <citation type="submission" date="2005-08" db="EMBL/GenBank/DDBJ databases">
        <title>Identification of nerve growth factor as a ubiquitous component of Australian elapid snake venoms.</title>
        <authorList>
            <person name="Earl S.T.H."/>
            <person name="St Pierre L."/>
            <person name="Birrell G.W."/>
            <person name="Wallis T.P."/>
            <person name="Masci P.P."/>
            <person name="de Jersey J."/>
            <person name="Gorman J.J."/>
            <person name="Lavin M.F."/>
        </authorList>
    </citation>
    <scope>NUCLEOTIDE SEQUENCE [MRNA]</scope>
    <source>
        <tissue>Venom gland</tissue>
    </source>
</reference>
<comment type="function">
    <text evidence="2 3">Nerve growth factor is important for the development and maintenance of the sympathetic and sensory nervous systems. It stimulates division and differentiation of sympathetic and embryonic sensory neurons as well as basal forebrain cholinergic neurons in the brain. Its relevance in the snake venom is not clear. However, it has been shown to inhibit metalloproteinase-dependent proteolysis of platelet glycoprotein Ib alpha, suggesting a metalloproteinase inhibition to prevent metalloprotease autodigestion and/or protection against prey proteases (By similarity). Binds a lipid between the two protein chains in the homodimer. The lipid-bound form promotes histamine relase from mouse mast cells, contrary to the lipid-free form (By similarity).</text>
</comment>
<comment type="subunit">
    <text evidence="2">Homodimer; non-covalently linked.</text>
</comment>
<comment type="subcellular location">
    <subcellularLocation>
        <location evidence="2">Secreted</location>
    </subcellularLocation>
</comment>
<comment type="tissue specificity">
    <text>Expressed by the venom gland.</text>
</comment>
<comment type="similarity">
    <text evidence="6">Belongs to the NGF-beta family.</text>
</comment>
<protein>
    <recommendedName>
        <fullName>Venom nerve growth factor 2</fullName>
        <shortName>v-NGF-2</shortName>
        <shortName>vNGF-2</shortName>
    </recommendedName>
</protein>
<sequence>MSMLCYTLIIAFLIGIWAAPKSEDNVPLGSPATSDLSDTSCAQTHEGLKTSRNTDQRHPAPKKAEDQELGSAANIIVDPKLFQKRRFQSPRVLFSTQPPPLSRDEQSVEFLDNEDTLNRNIRAKRENHPVHNQGEHSVCDSVSDWVIKTTATDIRGNMVTVMVDINRNNEVYKQYFFETKCRNPNPNPVQSERRGIDSRLWNSYCTTTQTFVRALTMEGNQASWRFIRIDTACVCVIIRKTDNF</sequence>
<feature type="signal peptide" evidence="4">
    <location>
        <begin position="1"/>
        <end position="18"/>
    </location>
</feature>
<feature type="propeptide" id="PRO_0000043296" evidence="1">
    <location>
        <begin position="19"/>
        <end position="125"/>
    </location>
</feature>
<feature type="chain" id="PRO_0000043297" description="Venom nerve growth factor 2">
    <location>
        <begin position="126"/>
        <end position="244"/>
    </location>
</feature>
<feature type="region of interest" description="Disordered" evidence="5">
    <location>
        <begin position="47"/>
        <end position="69"/>
    </location>
</feature>
<feature type="compositionally biased region" description="Basic and acidic residues" evidence="5">
    <location>
        <begin position="47"/>
        <end position="66"/>
    </location>
</feature>
<feature type="disulfide bond" evidence="2">
    <location>
        <begin position="139"/>
        <end position="205"/>
    </location>
</feature>
<feature type="disulfide bond" evidence="2">
    <location>
        <begin position="181"/>
        <end position="233"/>
    </location>
</feature>
<proteinExistence type="evidence at transcript level"/>
<evidence type="ECO:0000250" key="1"/>
<evidence type="ECO:0000250" key="2">
    <source>
        <dbReference type="UniProtKB" id="P61898"/>
    </source>
</evidence>
<evidence type="ECO:0000250" key="3">
    <source>
        <dbReference type="UniProtKB" id="P61899"/>
    </source>
</evidence>
<evidence type="ECO:0000255" key="4"/>
<evidence type="ECO:0000256" key="5">
    <source>
        <dbReference type="SAM" id="MobiDB-lite"/>
    </source>
</evidence>
<evidence type="ECO:0000305" key="6"/>
<keyword id="KW-0165">Cleavage on pair of basic residues</keyword>
<keyword id="KW-1015">Disulfide bond</keyword>
<keyword id="KW-0339">Growth factor</keyword>
<keyword id="KW-0446">Lipid-binding</keyword>
<keyword id="KW-0481">Metalloenzyme inhibitor</keyword>
<keyword id="KW-0483">Metalloprotease inhibitor</keyword>
<keyword id="KW-0646">Protease inhibitor</keyword>
<keyword id="KW-0964">Secreted</keyword>
<keyword id="KW-0732">Signal</keyword>
<keyword id="KW-0800">Toxin</keyword>
<name>NGFV2_NOTSC</name>
<organism>
    <name type="scientific">Notechis scutatus scutatus</name>
    <name type="common">Mainland tiger snake</name>
    <name type="synonym">Common tiger snake</name>
    <dbReference type="NCBI Taxonomy" id="70142"/>
    <lineage>
        <taxon>Eukaryota</taxon>
        <taxon>Metazoa</taxon>
        <taxon>Chordata</taxon>
        <taxon>Craniata</taxon>
        <taxon>Vertebrata</taxon>
        <taxon>Euteleostomi</taxon>
        <taxon>Lepidosauria</taxon>
        <taxon>Squamata</taxon>
        <taxon>Bifurcata</taxon>
        <taxon>Unidentata</taxon>
        <taxon>Episquamata</taxon>
        <taxon>Toxicofera</taxon>
        <taxon>Serpentes</taxon>
        <taxon>Colubroidea</taxon>
        <taxon>Elapidae</taxon>
        <taxon>Hydrophiinae</taxon>
        <taxon>Notechis</taxon>
    </lineage>
</organism>
<dbReference type="EMBL" id="DQ181909">
    <property type="protein sequence ID" value="ABA60121.1"/>
    <property type="molecule type" value="mRNA"/>
</dbReference>
<dbReference type="SMR" id="Q3HXY6"/>
<dbReference type="GO" id="GO:0030424">
    <property type="term" value="C:axon"/>
    <property type="evidence" value="ECO:0007669"/>
    <property type="project" value="TreeGrafter"/>
</dbReference>
<dbReference type="GO" id="GO:0030425">
    <property type="term" value="C:dendrite"/>
    <property type="evidence" value="ECO:0007669"/>
    <property type="project" value="TreeGrafter"/>
</dbReference>
<dbReference type="GO" id="GO:0005615">
    <property type="term" value="C:extracellular space"/>
    <property type="evidence" value="ECO:0007669"/>
    <property type="project" value="TreeGrafter"/>
</dbReference>
<dbReference type="GO" id="GO:0008021">
    <property type="term" value="C:synaptic vesicle"/>
    <property type="evidence" value="ECO:0007669"/>
    <property type="project" value="TreeGrafter"/>
</dbReference>
<dbReference type="GO" id="GO:0008083">
    <property type="term" value="F:growth factor activity"/>
    <property type="evidence" value="ECO:0007669"/>
    <property type="project" value="UniProtKB-KW"/>
</dbReference>
<dbReference type="GO" id="GO:0008289">
    <property type="term" value="F:lipid binding"/>
    <property type="evidence" value="ECO:0007669"/>
    <property type="project" value="UniProtKB-KW"/>
</dbReference>
<dbReference type="GO" id="GO:0008191">
    <property type="term" value="F:metalloendopeptidase inhibitor activity"/>
    <property type="evidence" value="ECO:0000250"/>
    <property type="project" value="UniProtKB"/>
</dbReference>
<dbReference type="GO" id="GO:0005163">
    <property type="term" value="F:nerve growth factor receptor binding"/>
    <property type="evidence" value="ECO:0007669"/>
    <property type="project" value="TreeGrafter"/>
</dbReference>
<dbReference type="GO" id="GO:0090729">
    <property type="term" value="F:toxin activity"/>
    <property type="evidence" value="ECO:0007669"/>
    <property type="project" value="UniProtKB-KW"/>
</dbReference>
<dbReference type="GO" id="GO:0007169">
    <property type="term" value="P:cell surface receptor protein tyrosine kinase signaling pathway"/>
    <property type="evidence" value="ECO:0007669"/>
    <property type="project" value="TreeGrafter"/>
</dbReference>
<dbReference type="GO" id="GO:0050804">
    <property type="term" value="P:modulation of chemical synaptic transmission"/>
    <property type="evidence" value="ECO:0007669"/>
    <property type="project" value="TreeGrafter"/>
</dbReference>
<dbReference type="GO" id="GO:0043524">
    <property type="term" value="P:negative regulation of neuron apoptotic process"/>
    <property type="evidence" value="ECO:0007669"/>
    <property type="project" value="TreeGrafter"/>
</dbReference>
<dbReference type="GO" id="GO:0021675">
    <property type="term" value="P:nerve development"/>
    <property type="evidence" value="ECO:0007669"/>
    <property type="project" value="TreeGrafter"/>
</dbReference>
<dbReference type="GO" id="GO:0038180">
    <property type="term" value="P:nerve growth factor signaling pathway"/>
    <property type="evidence" value="ECO:0007669"/>
    <property type="project" value="TreeGrafter"/>
</dbReference>
<dbReference type="GO" id="GO:0048812">
    <property type="term" value="P:neuron projection morphogenesis"/>
    <property type="evidence" value="ECO:0007669"/>
    <property type="project" value="TreeGrafter"/>
</dbReference>
<dbReference type="FunFam" id="2.10.90.10:FF:000002">
    <property type="entry name" value="Brain-derived neurotrophic factor"/>
    <property type="match status" value="1"/>
</dbReference>
<dbReference type="Gene3D" id="2.10.90.10">
    <property type="entry name" value="Cystine-knot cytokines"/>
    <property type="match status" value="1"/>
</dbReference>
<dbReference type="InterPro" id="IPR029034">
    <property type="entry name" value="Cystine-knot_cytokine"/>
</dbReference>
<dbReference type="InterPro" id="IPR020408">
    <property type="entry name" value="Nerve_growth_factor-like"/>
</dbReference>
<dbReference type="InterPro" id="IPR002072">
    <property type="entry name" value="Nerve_growth_factor-rel"/>
</dbReference>
<dbReference type="InterPro" id="IPR020425">
    <property type="entry name" value="Nerve_growth_factor_bsu"/>
</dbReference>
<dbReference type="InterPro" id="IPR020433">
    <property type="entry name" value="Venom_nerve_growth_factor"/>
</dbReference>
<dbReference type="PANTHER" id="PTHR11589:SF10">
    <property type="entry name" value="BETA-NERVE GROWTH FACTOR"/>
    <property type="match status" value="1"/>
</dbReference>
<dbReference type="PANTHER" id="PTHR11589">
    <property type="entry name" value="NERVE GROWTH FACTOR NGF -RELATED"/>
    <property type="match status" value="1"/>
</dbReference>
<dbReference type="Pfam" id="PF00243">
    <property type="entry name" value="NGF"/>
    <property type="match status" value="1"/>
</dbReference>
<dbReference type="PIRSF" id="PIRSF001789">
    <property type="entry name" value="NGF"/>
    <property type="match status" value="1"/>
</dbReference>
<dbReference type="PRINTS" id="PR00268">
    <property type="entry name" value="NGF"/>
</dbReference>
<dbReference type="PRINTS" id="PR01913">
    <property type="entry name" value="NGFBETA"/>
</dbReference>
<dbReference type="PRINTS" id="PR01917">
    <property type="entry name" value="VENOMNGF"/>
</dbReference>
<dbReference type="SMART" id="SM00140">
    <property type="entry name" value="NGF"/>
    <property type="match status" value="1"/>
</dbReference>
<dbReference type="SUPFAM" id="SSF57501">
    <property type="entry name" value="Cystine-knot cytokines"/>
    <property type="match status" value="1"/>
</dbReference>
<dbReference type="PROSITE" id="PS50270">
    <property type="entry name" value="NGF_2"/>
    <property type="match status" value="1"/>
</dbReference>